<dbReference type="EMBL" id="AC138394">
    <property type="status" value="NOT_ANNOTATED_CDS"/>
    <property type="molecule type" value="Genomic_DNA"/>
</dbReference>
<dbReference type="EMBL" id="BC005467">
    <property type="protein sequence ID" value="AAH05467.1"/>
    <property type="molecule type" value="mRNA"/>
</dbReference>
<dbReference type="CCDS" id="CCDS17431.1">
    <molecule id="E9PV24-2"/>
</dbReference>
<dbReference type="CCDS" id="CCDS50939.1">
    <molecule id="E9PV24-1"/>
</dbReference>
<dbReference type="RefSeq" id="NP_001104518.1">
    <molecule id="E9PV24-1"/>
    <property type="nucleotide sequence ID" value="NM_001111048.2"/>
</dbReference>
<dbReference type="RefSeq" id="NP_034326.1">
    <molecule id="E9PV24-2"/>
    <property type="nucleotide sequence ID" value="NM_010196.4"/>
</dbReference>
<dbReference type="SMR" id="E9PV24"/>
<dbReference type="BioGRID" id="199636">
    <property type="interactions" value="21"/>
</dbReference>
<dbReference type="ComplexPortal" id="CPX-1916">
    <property type="entry name" value="Fibrinogen"/>
</dbReference>
<dbReference type="FunCoup" id="E9PV24">
    <property type="interactions" value="408"/>
</dbReference>
<dbReference type="IntAct" id="E9PV24">
    <property type="interactions" value="2"/>
</dbReference>
<dbReference type="STRING" id="10090.ENSMUSP00000133117"/>
<dbReference type="GlyCosmos" id="E9PV24">
    <property type="glycosylation" value="1 site, No reported glycans"/>
</dbReference>
<dbReference type="GlyGen" id="E9PV24">
    <property type="glycosylation" value="2 sites, 1 O-linked glycan (1 site)"/>
</dbReference>
<dbReference type="iPTMnet" id="E9PV24"/>
<dbReference type="PhosphoSitePlus" id="E9PV24"/>
<dbReference type="SwissPalm" id="E9PV24"/>
<dbReference type="CPTAC" id="non-CPTAC-3709"/>
<dbReference type="jPOST" id="E9PV24"/>
<dbReference type="PaxDb" id="10090-ENSMUSP00000133117"/>
<dbReference type="PeptideAtlas" id="E9PV24"/>
<dbReference type="ProteomicsDB" id="267583">
    <molecule id="E9PV24-1"/>
</dbReference>
<dbReference type="ProteomicsDB" id="267584">
    <molecule id="E9PV24-2"/>
</dbReference>
<dbReference type="Antibodypedia" id="3395">
    <property type="antibodies" value="1117 antibodies from 45 providers"/>
</dbReference>
<dbReference type="DNASU" id="14161"/>
<dbReference type="Ensembl" id="ENSMUST00000029630.15">
    <molecule id="E9PV24-2"/>
    <property type="protein sequence ID" value="ENSMUSP00000029630.10"/>
    <property type="gene ID" value="ENSMUSG00000028001.17"/>
</dbReference>
<dbReference type="Ensembl" id="ENSMUST00000166581.4">
    <molecule id="E9PV24-1"/>
    <property type="protein sequence ID" value="ENSMUSP00000133117.2"/>
    <property type="gene ID" value="ENSMUSG00000028001.17"/>
</dbReference>
<dbReference type="GeneID" id="14161"/>
<dbReference type="KEGG" id="mmu:14161"/>
<dbReference type="UCSC" id="uc008ppf.2">
    <molecule id="E9PV24-2"/>
    <property type="organism name" value="mouse"/>
</dbReference>
<dbReference type="UCSC" id="uc012cqw.1">
    <molecule id="E9PV24-1"/>
    <property type="organism name" value="mouse"/>
</dbReference>
<dbReference type="AGR" id="MGI:1316726"/>
<dbReference type="CTD" id="2243"/>
<dbReference type="MGI" id="MGI:1316726">
    <property type="gene designation" value="Fga"/>
</dbReference>
<dbReference type="VEuPathDB" id="HostDB:ENSMUSG00000028001"/>
<dbReference type="eggNOG" id="KOG2579">
    <property type="taxonomic scope" value="Eukaryota"/>
</dbReference>
<dbReference type="GeneTree" id="ENSGT00940000157467"/>
<dbReference type="HOGENOM" id="CLU_013807_0_0_1"/>
<dbReference type="InParanoid" id="E9PV24"/>
<dbReference type="OMA" id="PRIVEHM"/>
<dbReference type="OrthoDB" id="9945370at2759"/>
<dbReference type="PhylomeDB" id="E9PV24"/>
<dbReference type="TreeFam" id="TF351984"/>
<dbReference type="Reactome" id="R-MMU-114608">
    <property type="pathway name" value="Platelet degranulation"/>
</dbReference>
<dbReference type="Reactome" id="R-MMU-140875">
    <property type="pathway name" value="Common Pathway of Fibrin Clot Formation"/>
</dbReference>
<dbReference type="Reactome" id="R-MMU-216083">
    <property type="pathway name" value="Integrin cell surface interactions"/>
</dbReference>
<dbReference type="Reactome" id="R-MMU-354192">
    <property type="pathway name" value="Integrin signaling"/>
</dbReference>
<dbReference type="Reactome" id="R-MMU-354194">
    <property type="pathway name" value="GRB2:SOS provides linkage to MAPK signaling for Integrins"/>
</dbReference>
<dbReference type="Reactome" id="R-MMU-372708">
    <property type="pathway name" value="p130Cas linkage to MAPK signaling for integrins"/>
</dbReference>
<dbReference type="Reactome" id="R-MMU-381426">
    <property type="pathway name" value="Regulation of Insulin-like Growth Factor (IGF) transport and uptake by Insulin-like Growth Factor Binding Proteins (IGFBPs)"/>
</dbReference>
<dbReference type="Reactome" id="R-MMU-5674135">
    <property type="pathway name" value="MAP2K and MAPK activation"/>
</dbReference>
<dbReference type="Reactome" id="R-MMU-5686938">
    <property type="pathway name" value="Regulation of TLR by endogenous ligand"/>
</dbReference>
<dbReference type="Reactome" id="R-MMU-8957275">
    <property type="pathway name" value="Post-translational protein phosphorylation"/>
</dbReference>
<dbReference type="BioGRID-ORCS" id="14161">
    <property type="hits" value="0 hits in 64 CRISPR screens"/>
</dbReference>
<dbReference type="ChiTaRS" id="Fga">
    <property type="organism name" value="mouse"/>
</dbReference>
<dbReference type="PRO" id="PR:E9PV24"/>
<dbReference type="Proteomes" id="UP000000589">
    <property type="component" value="Chromosome 3"/>
</dbReference>
<dbReference type="RNAct" id="E9PV24">
    <property type="molecule type" value="protein"/>
</dbReference>
<dbReference type="Bgee" id="ENSMUSG00000028001">
    <property type="expression patterns" value="Expressed in left lobe of liver and 49 other cell types or tissues"/>
</dbReference>
<dbReference type="GO" id="GO:0005938">
    <property type="term" value="C:cell cortex"/>
    <property type="evidence" value="ECO:0000314"/>
    <property type="project" value="MGI"/>
</dbReference>
<dbReference type="GO" id="GO:0062023">
    <property type="term" value="C:collagen-containing extracellular matrix"/>
    <property type="evidence" value="ECO:0007005"/>
    <property type="project" value="BHF-UCL"/>
</dbReference>
<dbReference type="GO" id="GO:0005577">
    <property type="term" value="C:fibrinogen complex"/>
    <property type="evidence" value="ECO:0007669"/>
    <property type="project" value="InterPro"/>
</dbReference>
<dbReference type="GO" id="GO:0045202">
    <property type="term" value="C:synapse"/>
    <property type="evidence" value="ECO:0000314"/>
    <property type="project" value="SynGO"/>
</dbReference>
<dbReference type="GO" id="GO:0046872">
    <property type="term" value="F:metal ion binding"/>
    <property type="evidence" value="ECO:0007669"/>
    <property type="project" value="UniProtKB-KW"/>
</dbReference>
<dbReference type="GO" id="GO:0005102">
    <property type="term" value="F:signaling receptor binding"/>
    <property type="evidence" value="ECO:0007669"/>
    <property type="project" value="InterPro"/>
</dbReference>
<dbReference type="GO" id="GO:0002250">
    <property type="term" value="P:adaptive immune response"/>
    <property type="evidence" value="ECO:0007669"/>
    <property type="project" value="UniProtKB-KW"/>
</dbReference>
<dbReference type="GO" id="GO:0007596">
    <property type="term" value="P:blood coagulation"/>
    <property type="evidence" value="ECO:0000315"/>
    <property type="project" value="MGI"/>
</dbReference>
<dbReference type="GO" id="GO:0045087">
    <property type="term" value="P:innate immune response"/>
    <property type="evidence" value="ECO:0007669"/>
    <property type="project" value="UniProtKB-KW"/>
</dbReference>
<dbReference type="GO" id="GO:0030168">
    <property type="term" value="P:platelet activation"/>
    <property type="evidence" value="ECO:0007669"/>
    <property type="project" value="InterPro"/>
</dbReference>
<dbReference type="GO" id="GO:0051258">
    <property type="term" value="P:protein polymerization"/>
    <property type="evidence" value="ECO:0007669"/>
    <property type="project" value="InterPro"/>
</dbReference>
<dbReference type="CDD" id="cd00087">
    <property type="entry name" value="FReD"/>
    <property type="match status" value="1"/>
</dbReference>
<dbReference type="FunFam" id="1.20.5.50:FF:000006">
    <property type="entry name" value="Fibrinogen alpha chain"/>
    <property type="match status" value="1"/>
</dbReference>
<dbReference type="FunFam" id="3.90.215.10:FF:000009">
    <property type="entry name" value="Fibrinogen alpha chain"/>
    <property type="match status" value="1"/>
</dbReference>
<dbReference type="FunFam" id="4.10.530.10:FF:000002">
    <property type="entry name" value="Fibrinogen gamma chain"/>
    <property type="match status" value="1"/>
</dbReference>
<dbReference type="Gene3D" id="1.20.5.50">
    <property type="match status" value="1"/>
</dbReference>
<dbReference type="Gene3D" id="3.90.215.10">
    <property type="entry name" value="Gamma Fibrinogen, chain A, domain 1"/>
    <property type="match status" value="1"/>
</dbReference>
<dbReference type="Gene3D" id="4.10.530.10">
    <property type="entry name" value="Gamma-fibrinogen Carboxyl Terminal Fragment, domain 2"/>
    <property type="match status" value="1"/>
</dbReference>
<dbReference type="InterPro" id="IPR037579">
    <property type="entry name" value="FIB_ANG-like"/>
</dbReference>
<dbReference type="InterPro" id="IPR036056">
    <property type="entry name" value="Fibrinogen-like_C"/>
</dbReference>
<dbReference type="InterPro" id="IPR014716">
    <property type="entry name" value="Fibrinogen_a/b/g_C_1"/>
</dbReference>
<dbReference type="InterPro" id="IPR002181">
    <property type="entry name" value="Fibrinogen_a/b/g_C_dom"/>
</dbReference>
<dbReference type="InterPro" id="IPR012290">
    <property type="entry name" value="Fibrinogen_a/b/g_coil_dom"/>
</dbReference>
<dbReference type="InterPro" id="IPR021996">
    <property type="entry name" value="Fibrinogen_aC"/>
</dbReference>
<dbReference type="InterPro" id="IPR020837">
    <property type="entry name" value="Fibrinogen_CS"/>
</dbReference>
<dbReference type="NCBIfam" id="NF040941">
    <property type="entry name" value="GGGWT_bact"/>
    <property type="match status" value="1"/>
</dbReference>
<dbReference type="PANTHER" id="PTHR47221">
    <property type="entry name" value="FIBRINOGEN ALPHA CHAIN"/>
    <property type="match status" value="1"/>
</dbReference>
<dbReference type="PANTHER" id="PTHR47221:SF3">
    <property type="entry name" value="FIBRINOGEN ALPHA CHAIN"/>
    <property type="match status" value="1"/>
</dbReference>
<dbReference type="Pfam" id="PF08702">
    <property type="entry name" value="Fib_alpha"/>
    <property type="match status" value="1"/>
</dbReference>
<dbReference type="Pfam" id="PF12160">
    <property type="entry name" value="Fibrinogen_aC"/>
    <property type="match status" value="1"/>
</dbReference>
<dbReference type="Pfam" id="PF00147">
    <property type="entry name" value="Fibrinogen_C"/>
    <property type="match status" value="1"/>
</dbReference>
<dbReference type="SMART" id="SM00186">
    <property type="entry name" value="FBG"/>
    <property type="match status" value="1"/>
</dbReference>
<dbReference type="SMART" id="SM01212">
    <property type="entry name" value="Fib_alpha"/>
    <property type="match status" value="1"/>
</dbReference>
<dbReference type="SUPFAM" id="SSF56496">
    <property type="entry name" value="Fibrinogen C-terminal domain-like"/>
    <property type="match status" value="1"/>
</dbReference>
<dbReference type="SUPFAM" id="SSF58010">
    <property type="entry name" value="Fibrinogen coiled-coil and central regions"/>
    <property type="match status" value="1"/>
</dbReference>
<dbReference type="PROSITE" id="PS00514">
    <property type="entry name" value="FIBRINOGEN_C_1"/>
    <property type="match status" value="1"/>
</dbReference>
<dbReference type="PROSITE" id="PS51406">
    <property type="entry name" value="FIBRINOGEN_C_2"/>
    <property type="match status" value="1"/>
</dbReference>
<proteinExistence type="evidence at protein level"/>
<reference key="1">
    <citation type="journal article" date="2009" name="PLoS Biol.">
        <title>Lineage-specific biology revealed by a finished genome assembly of the mouse.</title>
        <authorList>
            <person name="Church D.M."/>
            <person name="Goodstadt L."/>
            <person name="Hillier L.W."/>
            <person name="Zody M.C."/>
            <person name="Goldstein S."/>
            <person name="She X."/>
            <person name="Bult C.J."/>
            <person name="Agarwala R."/>
            <person name="Cherry J.L."/>
            <person name="DiCuccio M."/>
            <person name="Hlavina W."/>
            <person name="Kapustin Y."/>
            <person name="Meric P."/>
            <person name="Maglott D."/>
            <person name="Birtle Z."/>
            <person name="Marques A.C."/>
            <person name="Graves T."/>
            <person name="Zhou S."/>
            <person name="Teague B."/>
            <person name="Potamousis K."/>
            <person name="Churas C."/>
            <person name="Place M."/>
            <person name="Herschleb J."/>
            <person name="Runnheim R."/>
            <person name="Forrest D."/>
            <person name="Amos-Landgraf J."/>
            <person name="Schwartz D.C."/>
            <person name="Cheng Z."/>
            <person name="Lindblad-Toh K."/>
            <person name="Eichler E.E."/>
            <person name="Ponting C.P."/>
        </authorList>
    </citation>
    <scope>NUCLEOTIDE SEQUENCE [LARGE SCALE GENOMIC DNA]</scope>
    <source>
        <strain>C57BL/6J</strain>
    </source>
</reference>
<reference evidence="16" key="2">
    <citation type="journal article" date="2004" name="Genome Res.">
        <title>The status, quality, and expansion of the NIH full-length cDNA project: the Mammalian Gene Collection (MGC).</title>
        <authorList>
            <consortium name="The MGC Project Team"/>
        </authorList>
    </citation>
    <scope>NUCLEOTIDE SEQUENCE [LARGE SCALE MRNA] (ISOFORM 2)</scope>
</reference>
<reference evidence="14" key="3">
    <citation type="journal article" date="1995" name="Genes Dev.">
        <title>Resolution of spontaneous bleeding events but failure of pregnancy in fibrinogen-deficient mice.</title>
        <authorList>
            <person name="Suh T.T."/>
            <person name="Holmback K."/>
            <person name="Jensen N.J."/>
            <person name="Daugherty C.C."/>
            <person name="Small K."/>
            <person name="Simon D.I."/>
            <person name="Potter S."/>
            <person name="Degen J.L."/>
        </authorList>
    </citation>
    <scope>FUNCTION</scope>
    <scope>SUBCELLULAR LOCATION</scope>
    <scope>TISSUE SPECIFICITY</scope>
    <scope>DISRUPTION PHENOTYPE</scope>
</reference>
<reference evidence="14" key="4">
    <citation type="journal article" date="2000" name="J. Clin. Invest.">
        <title>Persistence of platelet thrombus formation in arterioles of mice lacking both von Willebrand factor and fibrinogen.</title>
        <authorList>
            <person name="Ni H."/>
            <person name="Denis C.V."/>
            <person name="Subbarao S."/>
            <person name="Degen J.L."/>
            <person name="Sato T.N."/>
            <person name="Hynes R.O."/>
            <person name="Wagner D.D."/>
        </authorList>
    </citation>
    <scope>FUNCTION</scope>
    <scope>DISRUPTION PHENOTYPE</scope>
</reference>
<reference evidence="14" key="5">
    <citation type="journal article" date="2001" name="Blood">
        <title>Wound-healing defects in mice lacking fibrinogen.</title>
        <authorList>
            <person name="Drew A.F."/>
            <person name="Liu H."/>
            <person name="Davidson J.M."/>
            <person name="Daugherty C.C."/>
            <person name="Degen J.L."/>
        </authorList>
    </citation>
    <scope>FUNCTION</scope>
</reference>
<reference evidence="14" key="6">
    <citation type="journal article" date="2003" name="J. Exp. Med.">
        <title>Fibrin-mediated protection against infection-stimulated immunopathology.</title>
        <authorList>
            <person name="Johnson L.L."/>
            <person name="Berggren K.N."/>
            <person name="Szaba F.M."/>
            <person name="Chen W."/>
            <person name="Smiley S.T."/>
        </authorList>
    </citation>
    <scope>FUNCTION</scope>
    <scope>DISRUPTION PHENOTYPE</scope>
</reference>
<reference evidence="14" key="7">
    <citation type="journal article" date="2005" name="Infect. Immun.">
        <title>Infection-stimulated fibrin deposition controls hemorrhage and limits hepatic bacterial growth during listeriosis.</title>
        <authorList>
            <person name="Mullarky I.K."/>
            <person name="Szaba F.M."/>
            <person name="Berggren K.N."/>
            <person name="Parent M.A."/>
            <person name="Kummer L.W."/>
            <person name="Chen W."/>
            <person name="Johnson L.L."/>
            <person name="Smiley S.T."/>
        </authorList>
    </citation>
    <scope>FUNCTION</scope>
    <scope>DISRUPTION PHENOTYPE</scope>
</reference>
<reference evidence="14" key="8">
    <citation type="journal article" date="2009" name="Blood">
        <title>Fibrinogen is required for maintenance of platelet intracellular and cell-surface P-selectin expression.</title>
        <authorList>
            <person name="Yang H."/>
            <person name="Lang S."/>
            <person name="Zhai Z."/>
            <person name="Li L."/>
            <person name="Kahr W.H."/>
            <person name="Chen P."/>
            <person name="Brkic J."/>
            <person name="Spring C.M."/>
            <person name="Flick M.J."/>
            <person name="Degen J.L."/>
            <person name="Freedman J."/>
            <person name="Ni H."/>
        </authorList>
    </citation>
    <scope>FUNCTION</scope>
</reference>
<reference key="9">
    <citation type="journal article" date="2010" name="Cell">
        <title>A tissue-specific atlas of mouse protein phosphorylation and expression.</title>
        <authorList>
            <person name="Huttlin E.L."/>
            <person name="Jedrychowski M.P."/>
            <person name="Elias J.E."/>
            <person name="Goswami T."/>
            <person name="Rad R."/>
            <person name="Beausoleil S.A."/>
            <person name="Villen J."/>
            <person name="Haas W."/>
            <person name="Sowa M.E."/>
            <person name="Gygi S.P."/>
        </authorList>
    </citation>
    <scope>PHOSPHORYLATION [LARGE SCALE ANALYSIS] AT SER-46 AND SER-447</scope>
    <scope>IDENTIFICATION BY MASS SPECTROMETRY [LARGE SCALE ANALYSIS]</scope>
    <source>
        <tissue>Brain</tissue>
        <tissue>Brown adipose tissue</tissue>
        <tissue>Heart</tissue>
        <tissue>Kidney</tissue>
        <tissue>Liver</tissue>
        <tissue>Lung</tissue>
        <tissue>Pancreas</tissue>
        <tissue>Spleen</tissue>
        <tissue>Testis</tissue>
    </source>
</reference>
<reference evidence="14" key="10">
    <citation type="journal article" date="2013" name="J. Immunol.">
        <title>Fibrin facilitates both innate and T cell-mediated defense against Yersinia pestis.</title>
        <authorList>
            <person name="Luo D."/>
            <person name="Lin J.S."/>
            <person name="Parent M.A."/>
            <person name="Mullarky-Kanevsky I."/>
            <person name="Szaba F.M."/>
            <person name="Kummer L.W."/>
            <person name="Duso D.K."/>
            <person name="Tighe M."/>
            <person name="Hill J."/>
            <person name="Gruber A."/>
            <person name="Mackman N."/>
            <person name="Gailani D."/>
            <person name="Smiley S.T."/>
        </authorList>
    </citation>
    <scope>FUNCTION</scope>
    <scope>DISRUPTION PHENOTYPE</scope>
</reference>
<protein>
    <recommendedName>
        <fullName>Fibrinogen alpha chain</fullName>
    </recommendedName>
    <component>
        <recommendedName>
            <fullName evidence="2">Fibrinopeptide A</fullName>
        </recommendedName>
    </component>
    <component>
        <recommendedName>
            <fullName>Fibrinogen alpha chain</fullName>
        </recommendedName>
    </component>
</protein>
<organism>
    <name type="scientific">Mus musculus</name>
    <name type="common">Mouse</name>
    <dbReference type="NCBI Taxonomy" id="10090"/>
    <lineage>
        <taxon>Eukaryota</taxon>
        <taxon>Metazoa</taxon>
        <taxon>Chordata</taxon>
        <taxon>Craniata</taxon>
        <taxon>Vertebrata</taxon>
        <taxon>Euteleostomi</taxon>
        <taxon>Mammalia</taxon>
        <taxon>Eutheria</taxon>
        <taxon>Euarchontoglires</taxon>
        <taxon>Glires</taxon>
        <taxon>Rodentia</taxon>
        <taxon>Myomorpha</taxon>
        <taxon>Muroidea</taxon>
        <taxon>Muridae</taxon>
        <taxon>Murinae</taxon>
        <taxon>Mus</taxon>
        <taxon>Mus</taxon>
    </lineage>
</organism>
<comment type="function">
    <text evidence="1 7 8 9 10 11 12 13">Cleaved by the protease thrombin to yield monomers which, together with fibrinogen beta (FGB) and fibrinogen gamma (FGG), polymerize to form an insoluble fibrin matrix. Fibrin has a major function in hemostasis as one of the primary components of blood clots (PubMed:7649481). In addition, functions during the early stages of wound repair to stabilize the lesion and guide cell migration during re-epithelialization (PubMed:11389004). Was originally thought to be essential for platelet aggregation, based on in vitro studies using anticoagulated blood (PubMed:7649481). However, subsequent studies have shown that it is not absolutely required for thrombus formation in vivo (PubMed:10930441). Enhances expression of SELP in activated platelets via an ITGB3-dependent pathway (PubMed:19332769). Maternal fibrinogen is essential for successful pregnancy (PubMed:7649481). Fibrin deposition is also associated with infection, where it protects against IFNG-mediated hemorrhage (PubMed:12629066). May also facilitate the immune response via both innate and T-cell mediated pathways (PubMed:23487423).</text>
</comment>
<comment type="subunit">
    <text evidence="1">Heterohexamer; disulfide linked. Contains 2 sets of 3 non-identical chains (alpha, beta and gamma). The 2 heterotrimers are in head to head conformation with the N-termini in a small central domain.</text>
</comment>
<comment type="subcellular location">
    <subcellularLocation>
        <location evidence="13">Secreted</location>
    </subcellularLocation>
</comment>
<comment type="alternative products">
    <event type="alternative splicing"/>
    <isoform>
        <id>E9PV24-1</id>
        <name>1</name>
        <sequence type="displayed"/>
    </isoform>
    <isoform>
        <id>E9PV24-2</id>
        <name>2</name>
        <sequence type="described" ref="VSP_057097 VSP_057098"/>
    </isoform>
</comment>
<comment type="tissue specificity">
    <text evidence="13">Expressed in liver.</text>
</comment>
<comment type="domain">
    <text evidence="1">A long coiled coil structure formed by 3 polypeptide chains connects the central nodule to the C-terminal domains (distal nodules). The long C-terminal ends of the alpha chains fold back, contributing a fourth strand to the coiled coil structure.</text>
</comment>
<comment type="PTM">
    <text evidence="1">Conversion of fibrinogen to fibrin is triggered by thrombin, which cleaves fibrinopeptides A and B from alpha and beta chains, and thus exposes the N-terminal polymerization sites responsible for the formation of the soft clot. The soft clot is converted into the hard clot by factor XIIIA which catalyzes the epsilon-(gamma-glutamyl)lysine cross-linking between gamma chains (stronger) and between alpha chains (weaker) of different monomers.</text>
</comment>
<comment type="PTM">
    <text evidence="1">Forms F13A-mediated cross-links between a glutamine and the epsilon-amino group of a lysine residue, forming fibronectin-fibrinogen heteropolymers.</text>
</comment>
<comment type="PTM">
    <text evidence="1">Phosphorylated by FAM20C in the extracellular medium.</text>
</comment>
<comment type="disruption phenotype">
    <text evidence="7 9 10 12 13">Knockout mice are viable but only males are fertile (PubMed:7649481). Neonates frequently develop spontaneous hemorrhages, but in spite of this over 90% of mice survive the neonatal period (PubMed:7649481). However only half survive beyond 70 days of age; lethality is most often due to intra-abdominal hemorrhage (PubMed:7649481). Pregnancy in female mice fails at around 10 days of gestation, associated with severe intrauterine bleeding (PubMed:7649481). Secondary loss of FGB and FGG from circulating blood is observed, although FGB and FGG mRNA is normally expressed in hepatocytes (thought to be the main site of fibrinogen synthesis) (PubMed:7649481). In vitro, blood fails to clot and platelet aggregations do not form (PubMed:7649481). In vivo, platelet aggregation in injured arterioles initially occurs normally although thrombi are unstable and readily embolize (PubMed:10930441). In double knockouts of FGA and VWF, platelet aggregation is delayed and thrombi frequently embolize (PubMed:10930441). Mice succumb more rapidly to Y.pestis infection, associated with increased bacterial loads in liver and lung; however induction of the inflammatory response factors TNF, IFNG, CXCL1, and LCN2 is not affected (PubMed:23487423). Mice succumb more rapidly to T.gondii infection, with increased hemorrhagic pathology; however parasite numbers are not significantly increased and induction of the inflammatory response markers IL12, IFNG, TNF, IL10, and nitric oxide is not affected (PubMed:12629066). Mice succumb more rapidly to L.monocytogenes infection, with increased hemorrhagic pathology and increased bacterial burdens in hepatic tissue; however there is little effect on peritoneal bacterial numbers or bacterial dissemination to other tissues, and also no effect on induction of the inflammatory markers IFNG, TNF and NOS2 (PubMed:15972474).</text>
</comment>
<gene>
    <name evidence="17" type="primary">Fga</name>
</gene>
<feature type="signal peptide" evidence="2 4">
    <location>
        <begin position="1"/>
        <end position="19"/>
    </location>
</feature>
<feature type="peptide" id="PRO_0000430789" description="Fibrinopeptide A" evidence="2">
    <location>
        <begin position="20"/>
        <end position="36"/>
    </location>
</feature>
<feature type="chain" id="PRO_0000430790" description="Fibrinogen alpha chain">
    <location>
        <begin position="37"/>
        <end position="789"/>
    </location>
</feature>
<feature type="domain" description="Fibrinogen C-terminal" evidence="5">
    <location>
        <begin position="546"/>
        <end position="787"/>
    </location>
</feature>
<feature type="region of interest" description="Disordered" evidence="6">
    <location>
        <begin position="263"/>
        <end position="420"/>
    </location>
</feature>
<feature type="region of interest" description="Disordered" evidence="6">
    <location>
        <begin position="526"/>
        <end position="555"/>
    </location>
</feature>
<feature type="coiled-coil region" evidence="3">
    <location>
        <begin position="69"/>
        <end position="554"/>
    </location>
</feature>
<feature type="compositionally biased region" description="Basic and acidic residues" evidence="6">
    <location>
        <begin position="263"/>
        <end position="287"/>
    </location>
</feature>
<feature type="compositionally biased region" description="Basic and acidic residues" evidence="6">
    <location>
        <begin position="384"/>
        <end position="396"/>
    </location>
</feature>
<feature type="compositionally biased region" description="Polar residues" evidence="6">
    <location>
        <begin position="397"/>
        <end position="416"/>
    </location>
</feature>
<feature type="compositionally biased region" description="Basic and acidic residues" evidence="6">
    <location>
        <begin position="526"/>
        <end position="541"/>
    </location>
</feature>
<feature type="binding site" evidence="1">
    <location>
        <position position="714"/>
    </location>
    <ligand>
        <name>Ca(2+)</name>
        <dbReference type="ChEBI" id="CHEBI:29108"/>
    </ligand>
</feature>
<feature type="binding site" evidence="1">
    <location>
        <position position="716"/>
    </location>
    <ligand>
        <name>Ca(2+)</name>
        <dbReference type="ChEBI" id="CHEBI:29108"/>
    </ligand>
</feature>
<feature type="binding site" evidence="1">
    <location>
        <position position="718"/>
    </location>
    <ligand>
        <name>Ca(2+)</name>
        <dbReference type="ChEBI" id="CHEBI:29108"/>
    </ligand>
</feature>
<feature type="binding site" evidence="1">
    <location>
        <position position="720"/>
    </location>
    <ligand>
        <name>Ca(2+)</name>
        <dbReference type="ChEBI" id="CHEBI:29108"/>
    </ligand>
</feature>
<feature type="site" description="Cleavage; by thrombin; to release fibrinopeptide A" evidence="2">
    <location>
        <begin position="36"/>
        <end position="37"/>
    </location>
</feature>
<feature type="site" description="Cleavage; by plasmin; to break down fibrin clots" evidence="1">
    <location>
        <begin position="101"/>
        <end position="102"/>
    </location>
</feature>
<feature type="site" description="Cleavage; by hementin; to prevent blood coagulation" evidence="1">
    <location>
        <begin position="122"/>
        <end position="123"/>
    </location>
</feature>
<feature type="site" description="Cleavage; by plasmin; to break down fibrin clots" evidence="1">
    <location>
        <begin position="124"/>
        <end position="125"/>
    </location>
</feature>
<feature type="modified residue" description="Phosphoserine" evidence="18">
    <location>
        <position position="46"/>
    </location>
</feature>
<feature type="modified residue" description="Phosphoserine" evidence="18">
    <location>
        <position position="447"/>
    </location>
</feature>
<feature type="modified residue" description="4-hydroxyproline; by P4HA1" evidence="1">
    <location>
        <position position="504"/>
    </location>
</feature>
<feature type="glycosylation site" description="N-linked (GlcNAc...) asparagine" evidence="4">
    <location>
        <position position="609"/>
    </location>
</feature>
<feature type="disulfide bond" description="Interchain" evidence="1">
    <location>
        <position position="48"/>
    </location>
</feature>
<feature type="disulfide bond" description="Interchain (with beta chain)" evidence="1">
    <location>
        <position position="56"/>
    </location>
</feature>
<feature type="disulfide bond" description="Interchain (with gamma chain)" evidence="1">
    <location>
        <position position="65"/>
    </location>
</feature>
<feature type="disulfide bond" description="Interchain (with beta chain)" evidence="1">
    <location>
        <position position="69"/>
    </location>
</feature>
<feature type="disulfide bond" description="Interchain (with gamma chain)" evidence="1">
    <location>
        <position position="181"/>
    </location>
</feature>
<feature type="disulfide bond" description="Interchain (with C-213 in beta chain)" evidence="1">
    <location>
        <position position="185"/>
    </location>
</feature>
<feature type="disulfide bond" evidence="1">
    <location>
        <begin position="408"/>
        <end position="438"/>
    </location>
</feature>
<feature type="disulfide bond" evidence="1">
    <location>
        <begin position="722"/>
        <end position="735"/>
    </location>
</feature>
<feature type="splice variant" id="VSP_057097" description="In isoform 2." evidence="15">
    <original>DCDD</original>
    <variation>GIDT</variation>
    <location>
        <begin position="554"/>
        <end position="557"/>
    </location>
</feature>
<feature type="splice variant" id="VSP_057098" description="In isoform 2." evidence="15">
    <location>
        <begin position="558"/>
        <end position="789"/>
    </location>
</feature>
<keyword id="KW-1064">Adaptive immunity</keyword>
<keyword id="KW-0025">Alternative splicing</keyword>
<keyword id="KW-0094">Blood coagulation</keyword>
<keyword id="KW-0106">Calcium</keyword>
<keyword id="KW-0175">Coiled coil</keyword>
<keyword id="KW-1015">Disulfide bond</keyword>
<keyword id="KW-0325">Glycoprotein</keyword>
<keyword id="KW-0356">Hemostasis</keyword>
<keyword id="KW-0379">Hydroxylation</keyword>
<keyword id="KW-0391">Immunity</keyword>
<keyword id="KW-0399">Innate immunity</keyword>
<keyword id="KW-0479">Metal-binding</keyword>
<keyword id="KW-0597">Phosphoprotein</keyword>
<keyword id="KW-1185">Reference proteome</keyword>
<keyword id="KW-0964">Secreted</keyword>
<keyword id="KW-0732">Signal</keyword>
<evidence type="ECO:0000250" key="1">
    <source>
        <dbReference type="UniProtKB" id="P02671"/>
    </source>
</evidence>
<evidence type="ECO:0000250" key="2">
    <source>
        <dbReference type="UniProtKB" id="P06399"/>
    </source>
</evidence>
<evidence type="ECO:0000250" key="3">
    <source>
        <dbReference type="UniProtKB" id="P14448"/>
    </source>
</evidence>
<evidence type="ECO:0000255" key="4"/>
<evidence type="ECO:0000255" key="5">
    <source>
        <dbReference type="PROSITE-ProRule" id="PRU00739"/>
    </source>
</evidence>
<evidence type="ECO:0000256" key="6">
    <source>
        <dbReference type="SAM" id="MobiDB-lite"/>
    </source>
</evidence>
<evidence type="ECO:0000269" key="7">
    <source>
    </source>
</evidence>
<evidence type="ECO:0000269" key="8">
    <source>
    </source>
</evidence>
<evidence type="ECO:0000269" key="9">
    <source>
    </source>
</evidence>
<evidence type="ECO:0000269" key="10">
    <source>
    </source>
</evidence>
<evidence type="ECO:0000269" key="11">
    <source>
    </source>
</evidence>
<evidence type="ECO:0000269" key="12">
    <source>
    </source>
</evidence>
<evidence type="ECO:0000269" key="13">
    <source>
    </source>
</evidence>
<evidence type="ECO:0000305" key="14"/>
<evidence type="ECO:0000305" key="15">
    <source>
    </source>
</evidence>
<evidence type="ECO:0000312" key="16">
    <source>
        <dbReference type="EMBL" id="AAH05467.1"/>
    </source>
</evidence>
<evidence type="ECO:0000312" key="17">
    <source>
        <dbReference type="MGI" id="MGI:1316726"/>
    </source>
</evidence>
<evidence type="ECO:0007744" key="18">
    <source>
    </source>
</evidence>
<sequence length="789" mass="87429">MLSLRVTCLILSVASTVWTTDTEDKGEFLSEGGGVRGPRVVERHQSQCKDSDWPFCSDDDWNHKCPSGCRMKGLIDEANQDFTNRINKLKNSLFDFQRNNKDSNSLTRNIMEYLRGDFANANNFDNTYGQVSEDLRRRIEILRRKVIEKAQQIQALQSNVRAQLIDMKRLEVDIDIKIRSCKGSCSRAVNREINLQDYEGHQKQLQQVIAKELLPTKDRQYLPALKMSPVPDLVPGSFKSQLQEAPPEWKALTEMRQMRMELERPGKDGGSRGDSPGDSRGDSRGDFATRGPGSKAENPTNPGPGGSGYWRPGNSGSGSDGNRNPGTTGSDGTGDWGTGSPRPGSDSGNFRPANPNWGVFSEFGDSSSPATRKEYHTGKAVTSKGDKELLIGKEKVTSSGTSTTHRSCSKTITKTVTGPDGRREVVKEVITSDDGSDCGDATELDISHSFSGSLDELSERHPDLSGFFDNHFGLISPNFKEFGSKTHSDSDILTNIEDPSSHVPEFSSSSKTSTVKKQVTKTYKMADEAGSEAHREGETRNTKRGRARARPTRDCDDVLQTQTSGAQNGIFSIKPPGSSKVFSVYCDQETSLGGWLLIQQRMDGSLNFNRTWQDYKRGFGSLNDKGEGEFWLGNDYLHLLTLRGSVLRVELEDWAGKEAYAEYHFRVGSEAEGYALQVSSYRGTAGDALVQGSVEEGTEYTSHSNMQFSTFDRDADQWEENCAEVYGGGWWYNSCQAANLNGIYYPGGTYDPRNNSPYEIENGVVWVPFRGADYSLRAVRMKIRPLVGQ</sequence>
<accession>E9PV24</accession>
<accession>Q99K47</accession>
<name>FIBA_MOUSE</name>